<reference key="1">
    <citation type="submission" date="2006-08" db="EMBL/GenBank/DDBJ databases">
        <title>Complete sequence of Shewanella frigidimarina NCIMB 400.</title>
        <authorList>
            <consortium name="US DOE Joint Genome Institute"/>
            <person name="Copeland A."/>
            <person name="Lucas S."/>
            <person name="Lapidus A."/>
            <person name="Barry K."/>
            <person name="Detter J.C."/>
            <person name="Glavina del Rio T."/>
            <person name="Hammon N."/>
            <person name="Israni S."/>
            <person name="Dalin E."/>
            <person name="Tice H."/>
            <person name="Pitluck S."/>
            <person name="Fredrickson J.K."/>
            <person name="Kolker E."/>
            <person name="McCuel L.A."/>
            <person name="DiChristina T."/>
            <person name="Nealson K.H."/>
            <person name="Newman D."/>
            <person name="Tiedje J.M."/>
            <person name="Zhou J."/>
            <person name="Romine M.F."/>
            <person name="Culley D.E."/>
            <person name="Serres M."/>
            <person name="Chertkov O."/>
            <person name="Brettin T."/>
            <person name="Bruce D."/>
            <person name="Han C."/>
            <person name="Tapia R."/>
            <person name="Gilna P."/>
            <person name="Schmutz J."/>
            <person name="Larimer F."/>
            <person name="Land M."/>
            <person name="Hauser L."/>
            <person name="Kyrpides N."/>
            <person name="Mikhailova N."/>
            <person name="Richardson P."/>
        </authorList>
    </citation>
    <scope>NUCLEOTIDE SEQUENCE [LARGE SCALE GENOMIC DNA]</scope>
    <source>
        <strain>NCIMB 400</strain>
    </source>
</reference>
<gene>
    <name evidence="1" type="primary">argS</name>
    <name type="ordered locus">Sfri_3762</name>
</gene>
<feature type="chain" id="PRO_1000018115" description="Arginine--tRNA ligase">
    <location>
        <begin position="1"/>
        <end position="581"/>
    </location>
</feature>
<feature type="short sequence motif" description="'HIGH' region">
    <location>
        <begin position="126"/>
        <end position="136"/>
    </location>
</feature>
<sequence length="581" mass="64702">MKSHIESLLEQTIESFKQQGIVPADFQARIQVDRTKDKSHGDLATNLAMMLTKVAKKNPRELAQLIIDTLPASSYVAKVEIAGPGFINFFIDDNALANQLQQALTSDHLGVALPTKQTIVVDYSSPNLAKEMHVGHLRSTIIGDSVVRALEYLGHNVIRQNHVGDWGTQFGMLLALMEELRAANGEQAKMELSDLESFYRAAKVRFDESTEFATRARQLVVALQSGDEYCNKLWREFNDISLSHCHDVYKRLGVSLTRADVHGESAYNADLAQVVKDLDAQGLLSESNGAKVVFQEAFRNKEGEPLPVIIQKADGGYLYATSDLAAMRYRSNVLKADRAMYFVDLRQALHFQQVFSLAKLAKFVRPEMSLEHTGFGTMNGEDGRPFKTRSGGVVKLVDLLDEADVRALELVRSKNPDMDEATLTEIARVVGISSVKYADLSKNRTSDYIFSFEQMLSFEGNTAPYLLYAYTRVAGIFKRATDIDLSQAKIVLEHEKEKDLGTKLAQFGEVLTRMTDKGLPHVLCGYLYELASEFSSFYEACPVLAAETEAQKQSRLLLAQLTAKTLKTGLSLLGIETLERM</sequence>
<protein>
    <recommendedName>
        <fullName evidence="1">Arginine--tRNA ligase</fullName>
        <ecNumber evidence="1">6.1.1.19</ecNumber>
    </recommendedName>
    <alternativeName>
        <fullName evidence="1">Arginyl-tRNA synthetase</fullName>
        <shortName evidence="1">ArgRS</shortName>
    </alternativeName>
</protein>
<proteinExistence type="inferred from homology"/>
<dbReference type="EC" id="6.1.1.19" evidence="1"/>
<dbReference type="EMBL" id="CP000447">
    <property type="protein sequence ID" value="ABI73589.1"/>
    <property type="molecule type" value="Genomic_DNA"/>
</dbReference>
<dbReference type="RefSeq" id="WP_011639177.1">
    <property type="nucleotide sequence ID" value="NC_008345.1"/>
</dbReference>
<dbReference type="SMR" id="Q07WM5"/>
<dbReference type="STRING" id="318167.Sfri_3762"/>
<dbReference type="KEGG" id="sfr:Sfri_3762"/>
<dbReference type="eggNOG" id="COG0018">
    <property type="taxonomic scope" value="Bacteria"/>
</dbReference>
<dbReference type="HOGENOM" id="CLU_006406_5_1_6"/>
<dbReference type="OrthoDB" id="9803211at2"/>
<dbReference type="Proteomes" id="UP000000684">
    <property type="component" value="Chromosome"/>
</dbReference>
<dbReference type="GO" id="GO:0005737">
    <property type="term" value="C:cytoplasm"/>
    <property type="evidence" value="ECO:0007669"/>
    <property type="project" value="UniProtKB-SubCell"/>
</dbReference>
<dbReference type="GO" id="GO:0004814">
    <property type="term" value="F:arginine-tRNA ligase activity"/>
    <property type="evidence" value="ECO:0007669"/>
    <property type="project" value="UniProtKB-UniRule"/>
</dbReference>
<dbReference type="GO" id="GO:0005524">
    <property type="term" value="F:ATP binding"/>
    <property type="evidence" value="ECO:0007669"/>
    <property type="project" value="UniProtKB-UniRule"/>
</dbReference>
<dbReference type="GO" id="GO:0006420">
    <property type="term" value="P:arginyl-tRNA aminoacylation"/>
    <property type="evidence" value="ECO:0007669"/>
    <property type="project" value="UniProtKB-UniRule"/>
</dbReference>
<dbReference type="CDD" id="cd07956">
    <property type="entry name" value="Anticodon_Ia_Arg"/>
    <property type="match status" value="1"/>
</dbReference>
<dbReference type="CDD" id="cd00671">
    <property type="entry name" value="ArgRS_core"/>
    <property type="match status" value="1"/>
</dbReference>
<dbReference type="FunFam" id="3.30.1360.70:FF:000003">
    <property type="entry name" value="Arginine--tRNA ligase"/>
    <property type="match status" value="1"/>
</dbReference>
<dbReference type="FunFam" id="3.40.50.620:FF:000030">
    <property type="entry name" value="Arginine--tRNA ligase"/>
    <property type="match status" value="1"/>
</dbReference>
<dbReference type="FunFam" id="1.10.730.10:FF:000006">
    <property type="entry name" value="Arginyl-tRNA synthetase 2, mitochondrial"/>
    <property type="match status" value="1"/>
</dbReference>
<dbReference type="Gene3D" id="3.30.1360.70">
    <property type="entry name" value="Arginyl tRNA synthetase N-terminal domain"/>
    <property type="match status" value="1"/>
</dbReference>
<dbReference type="Gene3D" id="3.40.50.620">
    <property type="entry name" value="HUPs"/>
    <property type="match status" value="1"/>
</dbReference>
<dbReference type="Gene3D" id="1.10.730.10">
    <property type="entry name" value="Isoleucyl-tRNA Synthetase, Domain 1"/>
    <property type="match status" value="1"/>
</dbReference>
<dbReference type="HAMAP" id="MF_00123">
    <property type="entry name" value="Arg_tRNA_synth"/>
    <property type="match status" value="1"/>
</dbReference>
<dbReference type="InterPro" id="IPR001412">
    <property type="entry name" value="aa-tRNA-synth_I_CS"/>
</dbReference>
<dbReference type="InterPro" id="IPR001278">
    <property type="entry name" value="Arg-tRNA-ligase"/>
</dbReference>
<dbReference type="InterPro" id="IPR005148">
    <property type="entry name" value="Arg-tRNA-synth_N"/>
</dbReference>
<dbReference type="InterPro" id="IPR036695">
    <property type="entry name" value="Arg-tRNA-synth_N_sf"/>
</dbReference>
<dbReference type="InterPro" id="IPR035684">
    <property type="entry name" value="ArgRS_core"/>
</dbReference>
<dbReference type="InterPro" id="IPR008909">
    <property type="entry name" value="DALR_anticod-bd"/>
</dbReference>
<dbReference type="InterPro" id="IPR014729">
    <property type="entry name" value="Rossmann-like_a/b/a_fold"/>
</dbReference>
<dbReference type="InterPro" id="IPR009080">
    <property type="entry name" value="tRNAsynth_Ia_anticodon-bd"/>
</dbReference>
<dbReference type="NCBIfam" id="TIGR00456">
    <property type="entry name" value="argS"/>
    <property type="match status" value="1"/>
</dbReference>
<dbReference type="PANTHER" id="PTHR11956:SF5">
    <property type="entry name" value="ARGININE--TRNA LIGASE, CYTOPLASMIC"/>
    <property type="match status" value="1"/>
</dbReference>
<dbReference type="PANTHER" id="PTHR11956">
    <property type="entry name" value="ARGINYL-TRNA SYNTHETASE"/>
    <property type="match status" value="1"/>
</dbReference>
<dbReference type="Pfam" id="PF03485">
    <property type="entry name" value="Arg_tRNA_synt_N"/>
    <property type="match status" value="1"/>
</dbReference>
<dbReference type="Pfam" id="PF05746">
    <property type="entry name" value="DALR_1"/>
    <property type="match status" value="1"/>
</dbReference>
<dbReference type="Pfam" id="PF00750">
    <property type="entry name" value="tRNA-synt_1d"/>
    <property type="match status" value="1"/>
</dbReference>
<dbReference type="PRINTS" id="PR01038">
    <property type="entry name" value="TRNASYNTHARG"/>
</dbReference>
<dbReference type="SMART" id="SM01016">
    <property type="entry name" value="Arg_tRNA_synt_N"/>
    <property type="match status" value="1"/>
</dbReference>
<dbReference type="SMART" id="SM00836">
    <property type="entry name" value="DALR_1"/>
    <property type="match status" value="1"/>
</dbReference>
<dbReference type="SUPFAM" id="SSF47323">
    <property type="entry name" value="Anticodon-binding domain of a subclass of class I aminoacyl-tRNA synthetases"/>
    <property type="match status" value="1"/>
</dbReference>
<dbReference type="SUPFAM" id="SSF55190">
    <property type="entry name" value="Arginyl-tRNA synthetase (ArgRS), N-terminal 'additional' domain"/>
    <property type="match status" value="1"/>
</dbReference>
<dbReference type="SUPFAM" id="SSF52374">
    <property type="entry name" value="Nucleotidylyl transferase"/>
    <property type="match status" value="1"/>
</dbReference>
<dbReference type="PROSITE" id="PS00178">
    <property type="entry name" value="AA_TRNA_LIGASE_I"/>
    <property type="match status" value="1"/>
</dbReference>
<name>SYR_SHEFN</name>
<organism>
    <name type="scientific">Shewanella frigidimarina (strain NCIMB 400)</name>
    <dbReference type="NCBI Taxonomy" id="318167"/>
    <lineage>
        <taxon>Bacteria</taxon>
        <taxon>Pseudomonadati</taxon>
        <taxon>Pseudomonadota</taxon>
        <taxon>Gammaproteobacteria</taxon>
        <taxon>Alteromonadales</taxon>
        <taxon>Shewanellaceae</taxon>
        <taxon>Shewanella</taxon>
    </lineage>
</organism>
<keyword id="KW-0030">Aminoacyl-tRNA synthetase</keyword>
<keyword id="KW-0067">ATP-binding</keyword>
<keyword id="KW-0963">Cytoplasm</keyword>
<keyword id="KW-0436">Ligase</keyword>
<keyword id="KW-0547">Nucleotide-binding</keyword>
<keyword id="KW-0648">Protein biosynthesis</keyword>
<keyword id="KW-1185">Reference proteome</keyword>
<accession>Q07WM5</accession>
<comment type="catalytic activity">
    <reaction evidence="1">
        <text>tRNA(Arg) + L-arginine + ATP = L-arginyl-tRNA(Arg) + AMP + diphosphate</text>
        <dbReference type="Rhea" id="RHEA:20301"/>
        <dbReference type="Rhea" id="RHEA-COMP:9658"/>
        <dbReference type="Rhea" id="RHEA-COMP:9673"/>
        <dbReference type="ChEBI" id="CHEBI:30616"/>
        <dbReference type="ChEBI" id="CHEBI:32682"/>
        <dbReference type="ChEBI" id="CHEBI:33019"/>
        <dbReference type="ChEBI" id="CHEBI:78442"/>
        <dbReference type="ChEBI" id="CHEBI:78513"/>
        <dbReference type="ChEBI" id="CHEBI:456215"/>
        <dbReference type="EC" id="6.1.1.19"/>
    </reaction>
</comment>
<comment type="subunit">
    <text evidence="1">Monomer.</text>
</comment>
<comment type="subcellular location">
    <subcellularLocation>
        <location evidence="1">Cytoplasm</location>
    </subcellularLocation>
</comment>
<comment type="similarity">
    <text evidence="1">Belongs to the class-I aminoacyl-tRNA synthetase family.</text>
</comment>
<evidence type="ECO:0000255" key="1">
    <source>
        <dbReference type="HAMAP-Rule" id="MF_00123"/>
    </source>
</evidence>